<name>PYRG_YERPN</name>
<sequence length="545" mass="60363">MTTNYIFVTGGVVSSLGKGIAAASLAAILEARGLNVTIMKLDPYINVDPGTMSPTQHGEVFVTEDGAETDLDLGHYERFIRTKMTRRNNFTTGRIYSEVLRKERRGDYLGATIQVIPHITNAIKERIIEGGEGHDVVLVEIGGTVGDIESLPFLEAIRQMAVDVGREHTLYMHLTLVPYLAAAGEVKTKPTQHSVKELLSIGIQPDVLICRSDRAVPANERAKIALFCNVPEKAVISLKDVDSIYKIPGLLKSQGLDDYICKRFSLTCPEANLAEWEQVLYEESNPGGEVTIGMIGKYVELPDAYKSVIEALKHGGLKNRLTVNIKLIDSQDVETRGEEMLKELDAILIPGGFGYRGVEGKVLAARYAREHNIPYLGICLGMQVALMEFARNVAGMENANSTEFVPDCKYPVVALITEWRDEDGNVEIRTEESDLGGTMRVGGQQCHLTEGSLVRQMYGEPTIVERHRHRYEVNNMLLKQIEAAGLRVAGRSADNKLVEIIELPDHPWFVACQFHPEFTSTPRDGHPLFAGFVKAAGDYQKRQVK</sequence>
<reference key="1">
    <citation type="journal article" date="2006" name="J. Bacteriol.">
        <title>Complete genome sequence of Yersinia pestis strains Antiqua and Nepal516: evidence of gene reduction in an emerging pathogen.</title>
        <authorList>
            <person name="Chain P.S.G."/>
            <person name="Hu P."/>
            <person name="Malfatti S.A."/>
            <person name="Radnedge L."/>
            <person name="Larimer F."/>
            <person name="Vergez L.M."/>
            <person name="Worsham P."/>
            <person name="Chu M.C."/>
            <person name="Andersen G.L."/>
        </authorList>
    </citation>
    <scope>NUCLEOTIDE SEQUENCE [LARGE SCALE GENOMIC DNA]</scope>
    <source>
        <strain>Nepal516</strain>
    </source>
</reference>
<reference key="2">
    <citation type="submission" date="2009-04" db="EMBL/GenBank/DDBJ databases">
        <title>Yersinia pestis Nepal516A whole genome shotgun sequencing project.</title>
        <authorList>
            <person name="Plunkett G. III"/>
            <person name="Anderson B.D."/>
            <person name="Baumler D.J."/>
            <person name="Burland V."/>
            <person name="Cabot E.L."/>
            <person name="Glasner J.D."/>
            <person name="Mau B."/>
            <person name="Neeno-Eckwall E."/>
            <person name="Perna N.T."/>
            <person name="Munk A.C."/>
            <person name="Tapia R."/>
            <person name="Green L.D."/>
            <person name="Rogers Y.C."/>
            <person name="Detter J.C."/>
            <person name="Bruce D.C."/>
            <person name="Brettin T.S."/>
        </authorList>
    </citation>
    <scope>NUCLEOTIDE SEQUENCE [LARGE SCALE GENOMIC DNA]</scope>
    <source>
        <strain>Nepal516</strain>
    </source>
</reference>
<accession>Q1CLT3</accession>
<accession>C4GQ82</accession>
<dbReference type="EC" id="6.3.4.2" evidence="1"/>
<dbReference type="EMBL" id="CP000305">
    <property type="protein sequence ID" value="ABG17047.1"/>
    <property type="molecule type" value="Genomic_DNA"/>
</dbReference>
<dbReference type="EMBL" id="ACNQ01000007">
    <property type="protein sequence ID" value="EEO77908.1"/>
    <property type="molecule type" value="Genomic_DNA"/>
</dbReference>
<dbReference type="RefSeq" id="WP_002209376.1">
    <property type="nucleotide sequence ID" value="NZ_ACNQ01000007.1"/>
</dbReference>
<dbReference type="SMR" id="Q1CLT3"/>
<dbReference type="GeneID" id="96664251"/>
<dbReference type="KEGG" id="ypn:YPN_0715"/>
<dbReference type="HOGENOM" id="CLU_011675_5_0_6"/>
<dbReference type="UniPathway" id="UPA00159">
    <property type="reaction ID" value="UER00277"/>
</dbReference>
<dbReference type="Proteomes" id="UP000008936">
    <property type="component" value="Chromosome"/>
</dbReference>
<dbReference type="GO" id="GO:0005829">
    <property type="term" value="C:cytosol"/>
    <property type="evidence" value="ECO:0007669"/>
    <property type="project" value="TreeGrafter"/>
</dbReference>
<dbReference type="GO" id="GO:0005524">
    <property type="term" value="F:ATP binding"/>
    <property type="evidence" value="ECO:0007669"/>
    <property type="project" value="UniProtKB-KW"/>
</dbReference>
<dbReference type="GO" id="GO:0003883">
    <property type="term" value="F:CTP synthase activity"/>
    <property type="evidence" value="ECO:0007669"/>
    <property type="project" value="UniProtKB-UniRule"/>
</dbReference>
<dbReference type="GO" id="GO:0004359">
    <property type="term" value="F:glutaminase activity"/>
    <property type="evidence" value="ECO:0007669"/>
    <property type="project" value="RHEA"/>
</dbReference>
<dbReference type="GO" id="GO:0042802">
    <property type="term" value="F:identical protein binding"/>
    <property type="evidence" value="ECO:0007669"/>
    <property type="project" value="TreeGrafter"/>
</dbReference>
<dbReference type="GO" id="GO:0046872">
    <property type="term" value="F:metal ion binding"/>
    <property type="evidence" value="ECO:0007669"/>
    <property type="project" value="UniProtKB-KW"/>
</dbReference>
<dbReference type="GO" id="GO:0044210">
    <property type="term" value="P:'de novo' CTP biosynthetic process"/>
    <property type="evidence" value="ECO:0007669"/>
    <property type="project" value="UniProtKB-UniRule"/>
</dbReference>
<dbReference type="GO" id="GO:0019856">
    <property type="term" value="P:pyrimidine nucleobase biosynthetic process"/>
    <property type="evidence" value="ECO:0007669"/>
    <property type="project" value="TreeGrafter"/>
</dbReference>
<dbReference type="CDD" id="cd03113">
    <property type="entry name" value="CTPS_N"/>
    <property type="match status" value="1"/>
</dbReference>
<dbReference type="CDD" id="cd01746">
    <property type="entry name" value="GATase1_CTP_Synthase"/>
    <property type="match status" value="1"/>
</dbReference>
<dbReference type="FunFam" id="3.40.50.300:FF:000009">
    <property type="entry name" value="CTP synthase"/>
    <property type="match status" value="1"/>
</dbReference>
<dbReference type="FunFam" id="3.40.50.880:FF:000002">
    <property type="entry name" value="CTP synthase"/>
    <property type="match status" value="1"/>
</dbReference>
<dbReference type="Gene3D" id="3.40.50.880">
    <property type="match status" value="1"/>
</dbReference>
<dbReference type="Gene3D" id="3.40.50.300">
    <property type="entry name" value="P-loop containing nucleotide triphosphate hydrolases"/>
    <property type="match status" value="1"/>
</dbReference>
<dbReference type="HAMAP" id="MF_01227">
    <property type="entry name" value="PyrG"/>
    <property type="match status" value="1"/>
</dbReference>
<dbReference type="InterPro" id="IPR029062">
    <property type="entry name" value="Class_I_gatase-like"/>
</dbReference>
<dbReference type="InterPro" id="IPR004468">
    <property type="entry name" value="CTP_synthase"/>
</dbReference>
<dbReference type="InterPro" id="IPR017456">
    <property type="entry name" value="CTP_synthase_N"/>
</dbReference>
<dbReference type="InterPro" id="IPR017926">
    <property type="entry name" value="GATASE"/>
</dbReference>
<dbReference type="InterPro" id="IPR033828">
    <property type="entry name" value="GATase1_CTP_Synthase"/>
</dbReference>
<dbReference type="InterPro" id="IPR027417">
    <property type="entry name" value="P-loop_NTPase"/>
</dbReference>
<dbReference type="NCBIfam" id="NF003792">
    <property type="entry name" value="PRK05380.1"/>
    <property type="match status" value="1"/>
</dbReference>
<dbReference type="NCBIfam" id="TIGR00337">
    <property type="entry name" value="PyrG"/>
    <property type="match status" value="1"/>
</dbReference>
<dbReference type="PANTHER" id="PTHR11550">
    <property type="entry name" value="CTP SYNTHASE"/>
    <property type="match status" value="1"/>
</dbReference>
<dbReference type="PANTHER" id="PTHR11550:SF0">
    <property type="entry name" value="CTP SYNTHASE-RELATED"/>
    <property type="match status" value="1"/>
</dbReference>
<dbReference type="Pfam" id="PF06418">
    <property type="entry name" value="CTP_synth_N"/>
    <property type="match status" value="1"/>
</dbReference>
<dbReference type="Pfam" id="PF00117">
    <property type="entry name" value="GATase"/>
    <property type="match status" value="1"/>
</dbReference>
<dbReference type="SUPFAM" id="SSF52317">
    <property type="entry name" value="Class I glutamine amidotransferase-like"/>
    <property type="match status" value="1"/>
</dbReference>
<dbReference type="SUPFAM" id="SSF52540">
    <property type="entry name" value="P-loop containing nucleoside triphosphate hydrolases"/>
    <property type="match status" value="1"/>
</dbReference>
<dbReference type="PROSITE" id="PS51273">
    <property type="entry name" value="GATASE_TYPE_1"/>
    <property type="match status" value="1"/>
</dbReference>
<gene>
    <name evidence="1" type="primary">pyrG</name>
    <name type="ordered locus">YPN_0715</name>
    <name type="ORF">YP516_0760</name>
</gene>
<comment type="function">
    <text evidence="1">Catalyzes the ATP-dependent amination of UTP to CTP with either L-glutamine or ammonia as the source of nitrogen. Regulates intracellular CTP levels through interactions with the four ribonucleotide triphosphates.</text>
</comment>
<comment type="catalytic activity">
    <reaction evidence="1">
        <text>UTP + L-glutamine + ATP + H2O = CTP + L-glutamate + ADP + phosphate + 2 H(+)</text>
        <dbReference type="Rhea" id="RHEA:26426"/>
        <dbReference type="ChEBI" id="CHEBI:15377"/>
        <dbReference type="ChEBI" id="CHEBI:15378"/>
        <dbReference type="ChEBI" id="CHEBI:29985"/>
        <dbReference type="ChEBI" id="CHEBI:30616"/>
        <dbReference type="ChEBI" id="CHEBI:37563"/>
        <dbReference type="ChEBI" id="CHEBI:43474"/>
        <dbReference type="ChEBI" id="CHEBI:46398"/>
        <dbReference type="ChEBI" id="CHEBI:58359"/>
        <dbReference type="ChEBI" id="CHEBI:456216"/>
        <dbReference type="EC" id="6.3.4.2"/>
    </reaction>
</comment>
<comment type="catalytic activity">
    <reaction evidence="1">
        <text>L-glutamine + H2O = L-glutamate + NH4(+)</text>
        <dbReference type="Rhea" id="RHEA:15889"/>
        <dbReference type="ChEBI" id="CHEBI:15377"/>
        <dbReference type="ChEBI" id="CHEBI:28938"/>
        <dbReference type="ChEBI" id="CHEBI:29985"/>
        <dbReference type="ChEBI" id="CHEBI:58359"/>
    </reaction>
</comment>
<comment type="catalytic activity">
    <reaction evidence="1">
        <text>UTP + NH4(+) + ATP = CTP + ADP + phosphate + 2 H(+)</text>
        <dbReference type="Rhea" id="RHEA:16597"/>
        <dbReference type="ChEBI" id="CHEBI:15378"/>
        <dbReference type="ChEBI" id="CHEBI:28938"/>
        <dbReference type="ChEBI" id="CHEBI:30616"/>
        <dbReference type="ChEBI" id="CHEBI:37563"/>
        <dbReference type="ChEBI" id="CHEBI:43474"/>
        <dbReference type="ChEBI" id="CHEBI:46398"/>
        <dbReference type="ChEBI" id="CHEBI:456216"/>
    </reaction>
</comment>
<comment type="activity regulation">
    <text evidence="1">Allosterically activated by GTP, when glutamine is the substrate; GTP has no effect on the reaction when ammonia is the substrate. The allosteric effector GTP functions by stabilizing the protein conformation that binds the tetrahedral intermediate(s) formed during glutamine hydrolysis. Inhibited by the product CTP, via allosteric rather than competitive inhibition.</text>
</comment>
<comment type="pathway">
    <text evidence="1">Pyrimidine metabolism; CTP biosynthesis via de novo pathway; CTP from UDP: step 2/2.</text>
</comment>
<comment type="subunit">
    <text evidence="1">Homotetramer.</text>
</comment>
<comment type="miscellaneous">
    <text evidence="1">CTPSs have evolved a hybrid strategy for distinguishing between UTP and CTP. The overlapping regions of the product feedback inhibitory and substrate sites recognize a common feature in both compounds, the triphosphate moiety. To differentiate isosteric substrate and product pyrimidine rings, an additional pocket far from the expected kinase/ligase catalytic site, specifically recognizes the cytosine and ribose portions of the product inhibitor.</text>
</comment>
<comment type="similarity">
    <text evidence="1">Belongs to the CTP synthase family.</text>
</comment>
<evidence type="ECO:0000255" key="1">
    <source>
        <dbReference type="HAMAP-Rule" id="MF_01227"/>
    </source>
</evidence>
<proteinExistence type="inferred from homology"/>
<protein>
    <recommendedName>
        <fullName evidence="1">CTP synthase</fullName>
        <ecNumber evidence="1">6.3.4.2</ecNumber>
    </recommendedName>
    <alternativeName>
        <fullName evidence="1">Cytidine 5'-triphosphate synthase</fullName>
    </alternativeName>
    <alternativeName>
        <fullName evidence="1">Cytidine triphosphate synthetase</fullName>
        <shortName evidence="1">CTP synthetase</shortName>
        <shortName evidence="1">CTPS</shortName>
    </alternativeName>
    <alternativeName>
        <fullName evidence="1">UTP--ammonia ligase</fullName>
    </alternativeName>
</protein>
<feature type="chain" id="PRO_0000266268" description="CTP synthase">
    <location>
        <begin position="1"/>
        <end position="545"/>
    </location>
</feature>
<feature type="domain" description="Glutamine amidotransferase type-1" evidence="1">
    <location>
        <begin position="291"/>
        <end position="542"/>
    </location>
</feature>
<feature type="region of interest" description="Amidoligase domain" evidence="1">
    <location>
        <begin position="1"/>
        <end position="266"/>
    </location>
</feature>
<feature type="active site" description="Nucleophile; for glutamine hydrolysis" evidence="1">
    <location>
        <position position="379"/>
    </location>
</feature>
<feature type="active site" evidence="1">
    <location>
        <position position="515"/>
    </location>
</feature>
<feature type="active site" evidence="1">
    <location>
        <position position="517"/>
    </location>
</feature>
<feature type="binding site" evidence="1">
    <location>
        <position position="14"/>
    </location>
    <ligand>
        <name>CTP</name>
        <dbReference type="ChEBI" id="CHEBI:37563"/>
        <note>allosteric inhibitor</note>
    </ligand>
</feature>
<feature type="binding site" evidence="1">
    <location>
        <position position="14"/>
    </location>
    <ligand>
        <name>UTP</name>
        <dbReference type="ChEBI" id="CHEBI:46398"/>
    </ligand>
</feature>
<feature type="binding site" evidence="1">
    <location>
        <begin position="15"/>
        <end position="20"/>
    </location>
    <ligand>
        <name>ATP</name>
        <dbReference type="ChEBI" id="CHEBI:30616"/>
    </ligand>
</feature>
<feature type="binding site" evidence="1">
    <location>
        <position position="72"/>
    </location>
    <ligand>
        <name>ATP</name>
        <dbReference type="ChEBI" id="CHEBI:30616"/>
    </ligand>
</feature>
<feature type="binding site" evidence="1">
    <location>
        <position position="72"/>
    </location>
    <ligand>
        <name>Mg(2+)</name>
        <dbReference type="ChEBI" id="CHEBI:18420"/>
    </ligand>
</feature>
<feature type="binding site" evidence="1">
    <location>
        <position position="140"/>
    </location>
    <ligand>
        <name>Mg(2+)</name>
        <dbReference type="ChEBI" id="CHEBI:18420"/>
    </ligand>
</feature>
<feature type="binding site" evidence="1">
    <location>
        <begin position="147"/>
        <end position="149"/>
    </location>
    <ligand>
        <name>CTP</name>
        <dbReference type="ChEBI" id="CHEBI:37563"/>
        <note>allosteric inhibitor</note>
    </ligand>
</feature>
<feature type="binding site" evidence="1">
    <location>
        <begin position="187"/>
        <end position="192"/>
    </location>
    <ligand>
        <name>CTP</name>
        <dbReference type="ChEBI" id="CHEBI:37563"/>
        <note>allosteric inhibitor</note>
    </ligand>
</feature>
<feature type="binding site" evidence="1">
    <location>
        <begin position="187"/>
        <end position="192"/>
    </location>
    <ligand>
        <name>UTP</name>
        <dbReference type="ChEBI" id="CHEBI:46398"/>
    </ligand>
</feature>
<feature type="binding site" evidence="1">
    <location>
        <position position="223"/>
    </location>
    <ligand>
        <name>CTP</name>
        <dbReference type="ChEBI" id="CHEBI:37563"/>
        <note>allosteric inhibitor</note>
    </ligand>
</feature>
<feature type="binding site" evidence="1">
    <location>
        <position position="223"/>
    </location>
    <ligand>
        <name>UTP</name>
        <dbReference type="ChEBI" id="CHEBI:46398"/>
    </ligand>
</feature>
<feature type="binding site" evidence="1">
    <location>
        <begin position="239"/>
        <end position="241"/>
    </location>
    <ligand>
        <name>ATP</name>
        <dbReference type="ChEBI" id="CHEBI:30616"/>
    </ligand>
</feature>
<feature type="binding site" evidence="1">
    <location>
        <position position="352"/>
    </location>
    <ligand>
        <name>L-glutamine</name>
        <dbReference type="ChEBI" id="CHEBI:58359"/>
    </ligand>
</feature>
<feature type="binding site" evidence="1">
    <location>
        <begin position="380"/>
        <end position="383"/>
    </location>
    <ligand>
        <name>L-glutamine</name>
        <dbReference type="ChEBI" id="CHEBI:58359"/>
    </ligand>
</feature>
<feature type="binding site" evidence="1">
    <location>
        <position position="403"/>
    </location>
    <ligand>
        <name>L-glutamine</name>
        <dbReference type="ChEBI" id="CHEBI:58359"/>
    </ligand>
</feature>
<feature type="binding site" evidence="1">
    <location>
        <position position="470"/>
    </location>
    <ligand>
        <name>L-glutamine</name>
        <dbReference type="ChEBI" id="CHEBI:58359"/>
    </ligand>
</feature>
<organism>
    <name type="scientific">Yersinia pestis bv. Antiqua (strain Nepal516)</name>
    <dbReference type="NCBI Taxonomy" id="377628"/>
    <lineage>
        <taxon>Bacteria</taxon>
        <taxon>Pseudomonadati</taxon>
        <taxon>Pseudomonadota</taxon>
        <taxon>Gammaproteobacteria</taxon>
        <taxon>Enterobacterales</taxon>
        <taxon>Yersiniaceae</taxon>
        <taxon>Yersinia</taxon>
    </lineage>
</organism>
<keyword id="KW-0067">ATP-binding</keyword>
<keyword id="KW-0315">Glutamine amidotransferase</keyword>
<keyword id="KW-0436">Ligase</keyword>
<keyword id="KW-0460">Magnesium</keyword>
<keyword id="KW-0479">Metal-binding</keyword>
<keyword id="KW-0547">Nucleotide-binding</keyword>
<keyword id="KW-0665">Pyrimidine biosynthesis</keyword>